<evidence type="ECO:0000255" key="1">
    <source>
        <dbReference type="HAMAP-Rule" id="MF_01554"/>
    </source>
</evidence>
<comment type="function">
    <text evidence="1">Catalyzes the conversion of glucosamine-6-phosphate to glucosamine-1-phosphate.</text>
</comment>
<comment type="catalytic activity">
    <reaction evidence="1">
        <text>alpha-D-glucosamine 1-phosphate = D-glucosamine 6-phosphate</text>
        <dbReference type="Rhea" id="RHEA:23424"/>
        <dbReference type="ChEBI" id="CHEBI:58516"/>
        <dbReference type="ChEBI" id="CHEBI:58725"/>
        <dbReference type="EC" id="5.4.2.10"/>
    </reaction>
</comment>
<comment type="cofactor">
    <cofactor evidence="1">
        <name>Mg(2+)</name>
        <dbReference type="ChEBI" id="CHEBI:18420"/>
    </cofactor>
    <text evidence="1">Binds 1 Mg(2+) ion per subunit.</text>
</comment>
<comment type="PTM">
    <text evidence="1">Activated by phosphorylation.</text>
</comment>
<comment type="similarity">
    <text evidence="1">Belongs to the phosphohexose mutase family.</text>
</comment>
<feature type="chain" id="PRO_0000301390" description="Phosphoglucosamine mutase">
    <location>
        <begin position="1"/>
        <end position="451"/>
    </location>
</feature>
<feature type="active site" description="Phosphoserine intermediate" evidence="1">
    <location>
        <position position="101"/>
    </location>
</feature>
<feature type="binding site" description="via phosphate group" evidence="1">
    <location>
        <position position="101"/>
    </location>
    <ligand>
        <name>Mg(2+)</name>
        <dbReference type="ChEBI" id="CHEBI:18420"/>
    </ligand>
</feature>
<feature type="binding site" evidence="1">
    <location>
        <position position="240"/>
    </location>
    <ligand>
        <name>Mg(2+)</name>
        <dbReference type="ChEBI" id="CHEBI:18420"/>
    </ligand>
</feature>
<feature type="binding site" evidence="1">
    <location>
        <position position="242"/>
    </location>
    <ligand>
        <name>Mg(2+)</name>
        <dbReference type="ChEBI" id="CHEBI:18420"/>
    </ligand>
</feature>
<feature type="binding site" evidence="1">
    <location>
        <position position="244"/>
    </location>
    <ligand>
        <name>Mg(2+)</name>
        <dbReference type="ChEBI" id="CHEBI:18420"/>
    </ligand>
</feature>
<feature type="modified residue" description="Phosphoserine" evidence="1">
    <location>
        <position position="101"/>
    </location>
</feature>
<organism>
    <name type="scientific">Streptococcus pyogenes serotype M4 (strain MGAS10750)</name>
    <dbReference type="NCBI Taxonomy" id="370554"/>
    <lineage>
        <taxon>Bacteria</taxon>
        <taxon>Bacillati</taxon>
        <taxon>Bacillota</taxon>
        <taxon>Bacilli</taxon>
        <taxon>Lactobacillales</taxon>
        <taxon>Streptococcaceae</taxon>
        <taxon>Streptococcus</taxon>
    </lineage>
</organism>
<proteinExistence type="inferred from homology"/>
<gene>
    <name evidence="1" type="primary">glmM</name>
    <name type="ordered locus">MGAS10750_Spy0915</name>
</gene>
<sequence>MGKYFGTDGVRGEANVELTPELAFKLGRFGGYVLSQHETERPKVFVARDTRISGEMLESALIAGLLSVGIEVYKLGVLATPGVSYLVRTEKASAGVMISASHNPALDNGIKFFGNDGFKLADDQELEIEALLDAPEDTLPRPSAEGLGTLVDYPEGLRKYEKFLVTTGTDLSGMTVALDTANGAASVSARDVFLDLNAEIAVIGEKPNGLNINDGVGSTHPEQLQELVKETGADLGLAFDGDSDRLIAVDETGEIVDGDRIMFIIGKYLSEKGLLAHNTIVTTVMSNLGFHKALDKQGINKAITAVGDRYVVEEMRSSGYNLGGEQSGHVIIMDYNTTGDGQLTAIQLAKVMKETGKSLSELAAEVTIYPQKLVNIRVENSMKDRAMEVPAIANIIAKMEDEMAGNGRILVRPSGTEPLLRVMAEAPTDAEVDYYVDTIADVVRTEIGCDN</sequence>
<reference key="1">
    <citation type="journal article" date="2006" name="Proc. Natl. Acad. Sci. U.S.A.">
        <title>Molecular genetic anatomy of inter- and intraserotype variation in the human bacterial pathogen group A Streptococcus.</title>
        <authorList>
            <person name="Beres S.B."/>
            <person name="Richter E.W."/>
            <person name="Nagiec M.J."/>
            <person name="Sumby P."/>
            <person name="Porcella S.F."/>
            <person name="DeLeo F.R."/>
            <person name="Musser J.M."/>
        </authorList>
    </citation>
    <scope>NUCLEOTIDE SEQUENCE [LARGE SCALE GENOMIC DNA]</scope>
    <source>
        <strain>MGAS10750</strain>
    </source>
</reference>
<protein>
    <recommendedName>
        <fullName evidence="1">Phosphoglucosamine mutase</fullName>
        <ecNumber evidence="1">5.4.2.10</ecNumber>
    </recommendedName>
</protein>
<dbReference type="EC" id="5.4.2.10" evidence="1"/>
<dbReference type="EMBL" id="CP000262">
    <property type="protein sequence ID" value="ABF37865.1"/>
    <property type="molecule type" value="Genomic_DNA"/>
</dbReference>
<dbReference type="SMR" id="Q1J6W8"/>
<dbReference type="KEGG" id="spi:MGAS10750_Spy0915"/>
<dbReference type="HOGENOM" id="CLU_016950_7_0_9"/>
<dbReference type="Proteomes" id="UP000002434">
    <property type="component" value="Chromosome"/>
</dbReference>
<dbReference type="GO" id="GO:0005829">
    <property type="term" value="C:cytosol"/>
    <property type="evidence" value="ECO:0007669"/>
    <property type="project" value="TreeGrafter"/>
</dbReference>
<dbReference type="GO" id="GO:0000287">
    <property type="term" value="F:magnesium ion binding"/>
    <property type="evidence" value="ECO:0007669"/>
    <property type="project" value="UniProtKB-UniRule"/>
</dbReference>
<dbReference type="GO" id="GO:0008966">
    <property type="term" value="F:phosphoglucosamine mutase activity"/>
    <property type="evidence" value="ECO:0007669"/>
    <property type="project" value="UniProtKB-UniRule"/>
</dbReference>
<dbReference type="GO" id="GO:0004615">
    <property type="term" value="F:phosphomannomutase activity"/>
    <property type="evidence" value="ECO:0007669"/>
    <property type="project" value="TreeGrafter"/>
</dbReference>
<dbReference type="GO" id="GO:0005975">
    <property type="term" value="P:carbohydrate metabolic process"/>
    <property type="evidence" value="ECO:0007669"/>
    <property type="project" value="InterPro"/>
</dbReference>
<dbReference type="GO" id="GO:0009252">
    <property type="term" value="P:peptidoglycan biosynthetic process"/>
    <property type="evidence" value="ECO:0007669"/>
    <property type="project" value="TreeGrafter"/>
</dbReference>
<dbReference type="GO" id="GO:0006048">
    <property type="term" value="P:UDP-N-acetylglucosamine biosynthetic process"/>
    <property type="evidence" value="ECO:0007669"/>
    <property type="project" value="TreeGrafter"/>
</dbReference>
<dbReference type="CDD" id="cd05802">
    <property type="entry name" value="GlmM"/>
    <property type="match status" value="1"/>
</dbReference>
<dbReference type="FunFam" id="3.30.310.50:FF:000001">
    <property type="entry name" value="Phosphoglucosamine mutase"/>
    <property type="match status" value="1"/>
</dbReference>
<dbReference type="FunFam" id="3.40.120.10:FF:000001">
    <property type="entry name" value="Phosphoglucosamine mutase"/>
    <property type="match status" value="1"/>
</dbReference>
<dbReference type="FunFam" id="3.40.120.10:FF:000002">
    <property type="entry name" value="Phosphoglucosamine mutase"/>
    <property type="match status" value="1"/>
</dbReference>
<dbReference type="Gene3D" id="3.40.120.10">
    <property type="entry name" value="Alpha-D-Glucose-1,6-Bisphosphate, subunit A, domain 3"/>
    <property type="match status" value="3"/>
</dbReference>
<dbReference type="Gene3D" id="3.30.310.50">
    <property type="entry name" value="Alpha-D-phosphohexomutase, C-terminal domain"/>
    <property type="match status" value="1"/>
</dbReference>
<dbReference type="HAMAP" id="MF_01554_B">
    <property type="entry name" value="GlmM_B"/>
    <property type="match status" value="1"/>
</dbReference>
<dbReference type="InterPro" id="IPR005844">
    <property type="entry name" value="A-D-PHexomutase_a/b/a-I"/>
</dbReference>
<dbReference type="InterPro" id="IPR016055">
    <property type="entry name" value="A-D-PHexomutase_a/b/a-I/II/III"/>
</dbReference>
<dbReference type="InterPro" id="IPR005845">
    <property type="entry name" value="A-D-PHexomutase_a/b/a-II"/>
</dbReference>
<dbReference type="InterPro" id="IPR005846">
    <property type="entry name" value="A-D-PHexomutase_a/b/a-III"/>
</dbReference>
<dbReference type="InterPro" id="IPR005843">
    <property type="entry name" value="A-D-PHexomutase_C"/>
</dbReference>
<dbReference type="InterPro" id="IPR036900">
    <property type="entry name" value="A-D-PHexomutase_C_sf"/>
</dbReference>
<dbReference type="InterPro" id="IPR016066">
    <property type="entry name" value="A-D-PHexomutase_CS"/>
</dbReference>
<dbReference type="InterPro" id="IPR005841">
    <property type="entry name" value="Alpha-D-phosphohexomutase_SF"/>
</dbReference>
<dbReference type="InterPro" id="IPR006352">
    <property type="entry name" value="GlmM_bact"/>
</dbReference>
<dbReference type="InterPro" id="IPR050060">
    <property type="entry name" value="Phosphoglucosamine_mutase"/>
</dbReference>
<dbReference type="NCBIfam" id="TIGR01455">
    <property type="entry name" value="glmM"/>
    <property type="match status" value="1"/>
</dbReference>
<dbReference type="PANTHER" id="PTHR42946:SF1">
    <property type="entry name" value="PHOSPHOGLUCOMUTASE (ALPHA-D-GLUCOSE-1,6-BISPHOSPHATE-DEPENDENT)"/>
    <property type="match status" value="1"/>
</dbReference>
<dbReference type="PANTHER" id="PTHR42946">
    <property type="entry name" value="PHOSPHOHEXOSE MUTASE"/>
    <property type="match status" value="1"/>
</dbReference>
<dbReference type="Pfam" id="PF02878">
    <property type="entry name" value="PGM_PMM_I"/>
    <property type="match status" value="1"/>
</dbReference>
<dbReference type="Pfam" id="PF02879">
    <property type="entry name" value="PGM_PMM_II"/>
    <property type="match status" value="1"/>
</dbReference>
<dbReference type="Pfam" id="PF02880">
    <property type="entry name" value="PGM_PMM_III"/>
    <property type="match status" value="1"/>
</dbReference>
<dbReference type="Pfam" id="PF00408">
    <property type="entry name" value="PGM_PMM_IV"/>
    <property type="match status" value="1"/>
</dbReference>
<dbReference type="PRINTS" id="PR00509">
    <property type="entry name" value="PGMPMM"/>
</dbReference>
<dbReference type="SUPFAM" id="SSF55957">
    <property type="entry name" value="Phosphoglucomutase, C-terminal domain"/>
    <property type="match status" value="1"/>
</dbReference>
<dbReference type="SUPFAM" id="SSF53738">
    <property type="entry name" value="Phosphoglucomutase, first 3 domains"/>
    <property type="match status" value="3"/>
</dbReference>
<dbReference type="PROSITE" id="PS00710">
    <property type="entry name" value="PGM_PMM"/>
    <property type="match status" value="1"/>
</dbReference>
<name>GLMM_STRPF</name>
<accession>Q1J6W8</accession>
<keyword id="KW-0413">Isomerase</keyword>
<keyword id="KW-0460">Magnesium</keyword>
<keyword id="KW-0479">Metal-binding</keyword>
<keyword id="KW-0597">Phosphoprotein</keyword>